<comment type="function">
    <text evidence="1 7 10 12 14">Its primary physiological function is unclear. May play a role in neuronal development and synaptic plasticity. May be required for neuronal myelin sheath maintenance. May promote myelin homeostasis through acting as an agonist for ADGRG6 receptor. May play a role in iron uptake and iron homeostasis. Soluble oligomers are toxic to cultured neuroblastoma cells and induce apoptosis (in vitro) (By similarity). Association with GPC1 (via its heparan sulfate chains) targets PRNP to lipid rafts. Also provides Cu(2+) or Zn(2+) for the ascorbate-mediated GPC1 deaminase degradation of its heparan sulfate side chains (PubMed:12732622, PubMed:16492732, PubMed:19242475, PubMed:19568430).</text>
</comment>
<comment type="subunit">
    <text evidence="1 5 16">Monomer and homodimer. Has a tendency to aggregate into amyloid fibrils containing a cross-beta spine, formed by a steric zipper of superposed beta-strands. Soluble oligomers may represent an intermediate stage on the path to fibril formation. Copper binding may promote oligomerization. Interacts with GRB2, APP, ERI3/PRNPIP and SYN1 (PubMed:11571277). Mislocalized cytosolically exposed PrP interacts with MGRN1; this interaction alters MGRN1 subcellular location and causes lysosomal enlargement (By similarity). Interacts with APP. Interacts with KIAA1191 (By similarity). Interacts with ADGRG6 (PubMed:27501152).</text>
</comment>
<comment type="interaction">
    <interactant intactId="EBI-768613">
        <id>P04925</id>
    </interactant>
    <interactant intactId="EBI-14022231">
        <id>PRO_0000000118</id>
        <label>App</label>
        <dbReference type="UniProtKB" id="P12023"/>
    </interactant>
    <organismsDiffer>false</organismsDiffer>
    <experiments>2</experiments>
</comment>
<comment type="interaction">
    <interactant intactId="EBI-768613">
        <id>P04925</id>
    </interactant>
    <interactant intactId="EBI-770939">
        <id>O08532</id>
        <label>Cacna2d1</label>
    </interactant>
    <organismsDiffer>false</organismsDiffer>
    <experiments>3</experiments>
</comment>
<comment type="interaction">
    <interactant intactId="EBI-768613">
        <id>P04925</id>
    </interactant>
    <interactant intactId="EBI-1688">
        <id>Q60631</id>
        <label>Grb2</label>
    </interactant>
    <organismsDiffer>false</organismsDiffer>
    <experiments>7</experiments>
</comment>
<comment type="interaction">
    <interactant intactId="EBI-768613">
        <id>P04925</id>
    </interactant>
    <interactant intactId="EBI-768613">
        <id>P04925</id>
        <label>Prnp</label>
    </interactant>
    <organismsDiffer>false</organismsDiffer>
    <experiments>17</experiments>
</comment>
<comment type="interaction">
    <interactant intactId="EBI-768613">
        <id>P04925</id>
    </interactant>
    <interactant intactId="EBI-977302">
        <id>P04156</id>
        <label>PRNP</label>
    </interactant>
    <organismsDiffer>true</organismsDiffer>
    <experiments>3</experiments>
</comment>
<comment type="subcellular location">
    <subcellularLocation>
        <location evidence="5 20">Cell membrane</location>
        <topology>Lipid-anchor</topology>
        <topology>GPI-anchor</topology>
    </subcellularLocation>
    <subcellularLocation>
        <location evidence="6">Golgi apparatus</location>
    </subcellularLocation>
    <text evidence="5 7 11 20">Targeted to lipid rafts via association with the heparan sulfate chains of GPC1. Colocates, in the presence of Cu(2+), to. vesicles in para- and perinuclear regions, where both proteins undergo internalization. Heparin displaces PRNP from lipid rafts and promotes endocytosis.</text>
</comment>
<comment type="tissue specificity">
    <text evidence="10 14">Highly expressed in the brain, lung, kidney and heart. Expressed at low levels in the liver and spleen.</text>
</comment>
<comment type="domain">
    <text evidence="1">The normal, monomeric form has a mainly alpha-helical structure. The disease-associated, protease-resistant form forms amyloid fibrils containing a cross-beta spine, formed by a steric zipper of superposed beta-strands. Disease mutations may favor intermolecular contacts via short beta strands, and may thereby trigger oligomerization.</text>
</comment>
<comment type="domain">
    <text evidence="1">Contains an N-terminal region composed of octamer repeats. At low copper concentrations, the sidechains of His residues from three or four repeats contribute to the binding of a single copper ion. Alternatively, a copper ion can be bound by interaction with the sidechain and backbone amide nitrogen of a single His residue. The observed copper binding stoichiometry suggests that two repeat regions cooperate to stabilize the binding of a single copper ion. At higher copper concentrations, each octamer can bind one copper ion by interactions with the His sidechain and Gly backbone atoms. A mixture of binding types may occur, especially in the case of octamer repeat expansion. Copper binding may stabilize the conformation of this region and may promote oligomerization.</text>
</comment>
<comment type="PTM">
    <text evidence="10 13 14">N-glycosylated.</text>
</comment>
<comment type="disease">
    <text evidence="21">Found in high quantity in the brain of humans and animals infected with degenerative neurological diseases such as kuru, Creutzfeldt-Jakob disease (CJD), Gerstmann-Straussler syndrome (GSS), scrapie, bovine spongiform encephalopathy (BSE), transmissible mink encephalopathy (TME), etc.</text>
</comment>
<comment type="disruption phenotype">
    <text evidence="8 9 10 12 14 15 18 19">No visible phenotype. Mice develop chronic demyelinating polyneuropathy after 60 weeks. Mice show abnormally low iron levels throughout the body, and are mildly anemic. Iron accumulates in duodenum enterocytes, suggesting impaired transport from the intestine to the blood. Mice deficient for both Prnd and Prnp have the same phenotype as mice lacking Prnd; they are born at the expected Mendelian rate and appear grossly normal and healthy (PubMed:15007175, PubMed:15161660). Females are fertile, but males deficient for both Prnd and Prnp are sterile, in spite of normal mating behavior (PubMed:15007175, PubMed:15161660). Male sterility is due to impaired acrosome reaction (PubMed:15161660). Mutant sperm are able to fertilize oocytes in vitro, but many of the resulting embryos die before the morula stage (PubMed:15161660). Mutant sperm cells have elevated levels of DNA damage and DNA strand breaks, and this may be the cause for embryonic lethality (PubMed:15161660). Aging mice deficient for both Prnd and Prnp do not display loss of cerebellar Purkinje cells or develop ataxia, and do not develop neurological defects (PubMed:15007175).</text>
</comment>
<comment type="similarity">
    <text evidence="21">Belongs to the prion family.</text>
</comment>
<keyword id="KW-0002">3D-structure</keyword>
<keyword id="KW-0034">Amyloid</keyword>
<keyword id="KW-1003">Cell membrane</keyword>
<keyword id="KW-0186">Copper</keyword>
<keyword id="KW-0903">Direct protein sequencing</keyword>
<keyword id="KW-1015">Disulfide bond</keyword>
<keyword id="KW-0325">Glycoprotein</keyword>
<keyword id="KW-0333">Golgi apparatus</keyword>
<keyword id="KW-0336">GPI-anchor</keyword>
<keyword id="KW-0379">Hydroxylation</keyword>
<keyword id="KW-0449">Lipoprotein</keyword>
<keyword id="KW-0472">Membrane</keyword>
<keyword id="KW-0479">Metal-binding</keyword>
<keyword id="KW-0640">Prion</keyword>
<keyword id="KW-1185">Reference proteome</keyword>
<keyword id="KW-0677">Repeat</keyword>
<keyword id="KW-0732">Signal</keyword>
<keyword id="KW-0862">Zinc</keyword>
<dbReference type="EMBL" id="M18070">
    <property type="protein sequence ID" value="AAA39997.1"/>
    <property type="molecule type" value="Genomic_DNA"/>
</dbReference>
<dbReference type="EMBL" id="M18071">
    <property type="protein sequence ID" value="AAA39998.1"/>
    <property type="molecule type" value="Genomic_DNA"/>
</dbReference>
<dbReference type="EMBL" id="M13685">
    <property type="protein sequence ID" value="AAA39996.1"/>
    <property type="molecule type" value="mRNA"/>
</dbReference>
<dbReference type="EMBL" id="U29186">
    <property type="protein sequence ID" value="AAC02804.1"/>
    <property type="molecule type" value="Genomic_DNA"/>
</dbReference>
<dbReference type="EMBL" id="BC006703">
    <property type="protein sequence ID" value="AAH06703.1"/>
    <property type="molecule type" value="mRNA"/>
</dbReference>
<dbReference type="EMBL" id="M30384">
    <property type="protein sequence ID" value="AAA39999.1"/>
    <property type="molecule type" value="mRNA"/>
</dbReference>
<dbReference type="CCDS" id="CCDS16766.1"/>
<dbReference type="PIR" id="A29669">
    <property type="entry name" value="A23544"/>
</dbReference>
<dbReference type="RefSeq" id="NP_001265185.1">
    <property type="nucleotide sequence ID" value="NM_001278256.1"/>
</dbReference>
<dbReference type="RefSeq" id="NP_035300.1">
    <property type="nucleotide sequence ID" value="NM_011170.3"/>
</dbReference>
<dbReference type="PDB" id="1AG2">
    <property type="method" value="NMR"/>
    <property type="chains" value="A=123-225"/>
</dbReference>
<dbReference type="PDB" id="1XYX">
    <property type="method" value="NMR"/>
    <property type="chains" value="A=120-231"/>
</dbReference>
<dbReference type="PDB" id="1Y15">
    <property type="method" value="NMR"/>
    <property type="chains" value="A=120-231"/>
</dbReference>
<dbReference type="PDB" id="1Y16">
    <property type="method" value="NMR"/>
    <property type="chains" value="A=120-231"/>
</dbReference>
<dbReference type="PDB" id="2K5O">
    <property type="method" value="NMR"/>
    <property type="chains" value="A=120-231"/>
</dbReference>
<dbReference type="PDB" id="2KFM">
    <property type="method" value="NMR"/>
    <property type="chains" value="A=120-231"/>
</dbReference>
<dbReference type="PDB" id="2KFO">
    <property type="method" value="NMR"/>
    <property type="chains" value="A=120-231"/>
</dbReference>
<dbReference type="PDB" id="2KU5">
    <property type="method" value="NMR"/>
    <property type="chains" value="A=120-231"/>
</dbReference>
<dbReference type="PDB" id="2KU6">
    <property type="method" value="NMR"/>
    <property type="chains" value="A=120-231"/>
</dbReference>
<dbReference type="PDB" id="2L1D">
    <property type="method" value="NMR"/>
    <property type="chains" value="A=120-231"/>
</dbReference>
<dbReference type="PDB" id="2L1E">
    <property type="method" value="NMR"/>
    <property type="chains" value="A=120-231"/>
</dbReference>
<dbReference type="PDB" id="2L1H">
    <property type="method" value="NMR"/>
    <property type="chains" value="A=120-231"/>
</dbReference>
<dbReference type="PDB" id="2L1K">
    <property type="method" value="NMR"/>
    <property type="chains" value="A=120-231"/>
</dbReference>
<dbReference type="PDB" id="2L39">
    <property type="method" value="NMR"/>
    <property type="chains" value="A=118-231"/>
</dbReference>
<dbReference type="PDB" id="2L40">
    <property type="method" value="NMR"/>
    <property type="chains" value="A=120-231"/>
</dbReference>
<dbReference type="PDB" id="3NVG">
    <property type="method" value="X-ray"/>
    <property type="resolution" value="1.48 A"/>
    <property type="chains" value="A=137-142"/>
</dbReference>
<dbReference type="PDB" id="3NVH">
    <property type="method" value="X-ray"/>
    <property type="resolution" value="1.61 A"/>
    <property type="chains" value="A=137-143"/>
</dbReference>
<dbReference type="PDB" id="4H88">
    <property type="method" value="X-ray"/>
    <property type="resolution" value="1.90 A"/>
    <property type="chains" value="A=120-230"/>
</dbReference>
<dbReference type="PDB" id="4J8R">
    <property type="method" value="X-ray"/>
    <property type="resolution" value="2.30 A"/>
    <property type="chains" value="I/J=67-82"/>
</dbReference>
<dbReference type="PDB" id="4MA7">
    <property type="method" value="X-ray"/>
    <property type="resolution" value="1.97 A"/>
    <property type="chains" value="A=116-229"/>
</dbReference>
<dbReference type="PDB" id="4MA8">
    <property type="method" value="X-ray"/>
    <property type="resolution" value="2.20 A"/>
    <property type="chains" value="C=116-229"/>
</dbReference>
<dbReference type="PDB" id="6AQ7">
    <property type="method" value="X-ray"/>
    <property type="resolution" value="1.83 A"/>
    <property type="chains" value="A=127-225"/>
</dbReference>
<dbReference type="PDB" id="6HER">
    <property type="method" value="X-ray"/>
    <property type="resolution" value="1.20 A"/>
    <property type="chains" value="A=117-226"/>
</dbReference>
<dbReference type="PDB" id="6HHD">
    <property type="method" value="X-ray"/>
    <property type="resolution" value="2.10 A"/>
    <property type="chains" value="A=118-225, C=118-224"/>
</dbReference>
<dbReference type="PDB" id="7QIG">
    <property type="method" value="EM"/>
    <property type="resolution" value="2.70 A"/>
    <property type="chains" value="A/B/C=94-225"/>
</dbReference>
<dbReference type="PDB" id="7RVD">
    <property type="method" value="EM"/>
    <property type="resolution" value="1.00 A"/>
    <property type="chains" value="A=167-175"/>
</dbReference>
<dbReference type="PDB" id="7TD6">
    <property type="method" value="EM"/>
    <property type="resolution" value="3.00 A"/>
    <property type="chains" value="1/A/B/C/D=1-254"/>
</dbReference>
<dbReference type="PDB" id="8A00">
    <property type="method" value="EM"/>
    <property type="resolution" value="2.60 A"/>
    <property type="chains" value="A/B/C=94-229"/>
</dbReference>
<dbReference type="PDB" id="8DJA">
    <property type="method" value="EM"/>
    <property type="resolution" value="3.92 A"/>
    <property type="chains" value="A/B/C/D/E/F/G/H/I/J/K/L/M/N/O/P/Q/R/S/T=23-143"/>
</dbReference>
<dbReference type="PDB" id="8EFU">
    <property type="method" value="EM"/>
    <property type="resolution" value="3.20 A"/>
    <property type="chains" value="A/B/C/D/E=1-231"/>
</dbReference>
<dbReference type="PDBsum" id="1AG2"/>
<dbReference type="PDBsum" id="1XYX"/>
<dbReference type="PDBsum" id="1Y15"/>
<dbReference type="PDBsum" id="1Y16"/>
<dbReference type="PDBsum" id="2K5O"/>
<dbReference type="PDBsum" id="2KFM"/>
<dbReference type="PDBsum" id="2KFO"/>
<dbReference type="PDBsum" id="2KU5"/>
<dbReference type="PDBsum" id="2KU6"/>
<dbReference type="PDBsum" id="2L1D"/>
<dbReference type="PDBsum" id="2L1E"/>
<dbReference type="PDBsum" id="2L1H"/>
<dbReference type="PDBsum" id="2L1K"/>
<dbReference type="PDBsum" id="2L39"/>
<dbReference type="PDBsum" id="2L40"/>
<dbReference type="PDBsum" id="3NVG"/>
<dbReference type="PDBsum" id="3NVH"/>
<dbReference type="PDBsum" id="4H88"/>
<dbReference type="PDBsum" id="4J8R"/>
<dbReference type="PDBsum" id="4MA7"/>
<dbReference type="PDBsum" id="4MA8"/>
<dbReference type="PDBsum" id="6AQ7"/>
<dbReference type="PDBsum" id="6HER"/>
<dbReference type="PDBsum" id="6HHD"/>
<dbReference type="PDBsum" id="7QIG"/>
<dbReference type="PDBsum" id="7RVD"/>
<dbReference type="PDBsum" id="7TD6"/>
<dbReference type="PDBsum" id="8A00"/>
<dbReference type="PDBsum" id="8DJA"/>
<dbReference type="PDBsum" id="8EFU"/>
<dbReference type="BMRB" id="P04925"/>
<dbReference type="EMDB" id="EMD-13989"/>
<dbReference type="EMDB" id="EMD-15043"/>
<dbReference type="EMDB" id="EMD-25824"/>
<dbReference type="EMDB" id="EMD-27458"/>
<dbReference type="EMDB" id="EMD-28089"/>
<dbReference type="SASBDB" id="P04925"/>
<dbReference type="SMR" id="P04925"/>
<dbReference type="BioGRID" id="202389">
    <property type="interactions" value="66"/>
</dbReference>
<dbReference type="CORUM" id="P04925"/>
<dbReference type="DIP" id="DIP-4N"/>
<dbReference type="FunCoup" id="P04925">
    <property type="interactions" value="763"/>
</dbReference>
<dbReference type="IntAct" id="P04925">
    <property type="interactions" value="15"/>
</dbReference>
<dbReference type="MINT" id="P04925"/>
<dbReference type="STRING" id="10090.ENSMUSP00000088833"/>
<dbReference type="BindingDB" id="P04925"/>
<dbReference type="ChEMBL" id="CHEMBL3698"/>
<dbReference type="DrugCentral" id="P04925"/>
<dbReference type="GlyConnect" id="2499">
    <property type="glycosylation" value="3 N-Linked glycans (1 site)"/>
</dbReference>
<dbReference type="GlyCosmos" id="P04925">
    <property type="glycosylation" value="2 sites, 41 glycans"/>
</dbReference>
<dbReference type="GlyGen" id="P04925">
    <property type="glycosylation" value="6 sites, 43 N-linked glycans (2 sites), 1 O-linked glycan (1 site)"/>
</dbReference>
<dbReference type="iPTMnet" id="P04925"/>
<dbReference type="MetOSite" id="P04925"/>
<dbReference type="PhosphoSitePlus" id="P04925"/>
<dbReference type="SwissPalm" id="P04925"/>
<dbReference type="PaxDb" id="10090-ENSMUSP00000088833"/>
<dbReference type="PeptideAtlas" id="P04925"/>
<dbReference type="ProteomicsDB" id="289840"/>
<dbReference type="Pumba" id="P04925"/>
<dbReference type="ABCD" id="P04925">
    <property type="antibodies" value="25 sequenced antibodies"/>
</dbReference>
<dbReference type="Antibodypedia" id="3351">
    <property type="antibodies" value="874 antibodies from 46 providers"/>
</dbReference>
<dbReference type="DNASU" id="19122"/>
<dbReference type="Ensembl" id="ENSMUST00000091288.13">
    <property type="protein sequence ID" value="ENSMUSP00000088833.7"/>
    <property type="gene ID" value="ENSMUSG00000079037.10"/>
</dbReference>
<dbReference type="GeneID" id="19122"/>
<dbReference type="KEGG" id="mmu:19122"/>
<dbReference type="UCSC" id="uc008mly.3">
    <property type="organism name" value="mouse"/>
</dbReference>
<dbReference type="AGR" id="MGI:97769"/>
<dbReference type="CTD" id="5621"/>
<dbReference type="MGI" id="MGI:97769">
    <property type="gene designation" value="Prnp"/>
</dbReference>
<dbReference type="VEuPathDB" id="HostDB:ENSMUSG00000079037"/>
<dbReference type="eggNOG" id="ENOG502S2A8">
    <property type="taxonomic scope" value="Eukaryota"/>
</dbReference>
<dbReference type="GeneTree" id="ENSGT00510000049083"/>
<dbReference type="HOGENOM" id="CLU_094631_0_0_1"/>
<dbReference type="InParanoid" id="P04925"/>
<dbReference type="OMA" id="QMCTTQY"/>
<dbReference type="OrthoDB" id="9048788at2759"/>
<dbReference type="PhylomeDB" id="P04925"/>
<dbReference type="TreeFam" id="TF105188"/>
<dbReference type="Reactome" id="R-MMU-9609523">
    <property type="pathway name" value="Insertion of tail-anchored proteins into the endoplasmic reticulum membrane"/>
</dbReference>
<dbReference type="BioGRID-ORCS" id="19122">
    <property type="hits" value="1 hit in 76 CRISPR screens"/>
</dbReference>
<dbReference type="EvolutionaryTrace" id="P04925"/>
<dbReference type="PRO" id="PR:P04925"/>
<dbReference type="Proteomes" id="UP000000589">
    <property type="component" value="Chromosome 2"/>
</dbReference>
<dbReference type="RNAct" id="P04925">
    <property type="molecule type" value="protein"/>
</dbReference>
<dbReference type="Bgee" id="ENSMUSG00000079037">
    <property type="expression patterns" value="Expressed in bed nucleus of stria terminalis and 296 other cell types or tissues"/>
</dbReference>
<dbReference type="ExpressionAtlas" id="P04925">
    <property type="expression patterns" value="baseline and differential"/>
</dbReference>
<dbReference type="GO" id="GO:0009986">
    <property type="term" value="C:cell surface"/>
    <property type="evidence" value="ECO:0000314"/>
    <property type="project" value="MGI"/>
</dbReference>
<dbReference type="GO" id="GO:0005829">
    <property type="term" value="C:cytosol"/>
    <property type="evidence" value="ECO:0007669"/>
    <property type="project" value="Ensembl"/>
</dbReference>
<dbReference type="GO" id="GO:0030425">
    <property type="term" value="C:dendrite"/>
    <property type="evidence" value="ECO:0000314"/>
    <property type="project" value="ARUK-UCL"/>
</dbReference>
<dbReference type="GO" id="GO:0005783">
    <property type="term" value="C:endoplasmic reticulum"/>
    <property type="evidence" value="ECO:0000314"/>
    <property type="project" value="MGI"/>
</dbReference>
<dbReference type="GO" id="GO:0005794">
    <property type="term" value="C:Golgi apparatus"/>
    <property type="evidence" value="ECO:0000314"/>
    <property type="project" value="MGI"/>
</dbReference>
<dbReference type="GO" id="GO:0016234">
    <property type="term" value="C:inclusion body"/>
    <property type="evidence" value="ECO:0007669"/>
    <property type="project" value="Ensembl"/>
</dbReference>
<dbReference type="GO" id="GO:0016020">
    <property type="term" value="C:membrane"/>
    <property type="evidence" value="ECO:0000314"/>
    <property type="project" value="MGI"/>
</dbReference>
<dbReference type="GO" id="GO:0045121">
    <property type="term" value="C:membrane raft"/>
    <property type="evidence" value="ECO:0000314"/>
    <property type="project" value="MGI"/>
</dbReference>
<dbReference type="GO" id="GO:0031965">
    <property type="term" value="C:nuclear membrane"/>
    <property type="evidence" value="ECO:0007669"/>
    <property type="project" value="Ensembl"/>
</dbReference>
<dbReference type="GO" id="GO:0005886">
    <property type="term" value="C:plasma membrane"/>
    <property type="evidence" value="ECO:0000314"/>
    <property type="project" value="UniProtKB"/>
</dbReference>
<dbReference type="GO" id="GO:0014069">
    <property type="term" value="C:postsynaptic density"/>
    <property type="evidence" value="ECO:0007669"/>
    <property type="project" value="Ensembl"/>
</dbReference>
<dbReference type="GO" id="GO:0098552">
    <property type="term" value="C:side of membrane"/>
    <property type="evidence" value="ECO:0007669"/>
    <property type="project" value="UniProtKB-KW"/>
</dbReference>
<dbReference type="GO" id="GO:0043195">
    <property type="term" value="C:terminal bouton"/>
    <property type="evidence" value="ECO:0000314"/>
    <property type="project" value="CACAO"/>
</dbReference>
<dbReference type="GO" id="GO:0001540">
    <property type="term" value="F:amyloid-beta binding"/>
    <property type="evidence" value="ECO:0000314"/>
    <property type="project" value="ARUK-UCL"/>
</dbReference>
<dbReference type="GO" id="GO:0019828">
    <property type="term" value="F:aspartic-type endopeptidase inhibitor activity"/>
    <property type="evidence" value="ECO:0000314"/>
    <property type="project" value="ARUK-UCL"/>
</dbReference>
<dbReference type="GO" id="GO:0043008">
    <property type="term" value="F:ATP-dependent protein binding"/>
    <property type="evidence" value="ECO:0007669"/>
    <property type="project" value="Ensembl"/>
</dbReference>
<dbReference type="GO" id="GO:0005507">
    <property type="term" value="F:copper ion binding"/>
    <property type="evidence" value="ECO:0000314"/>
    <property type="project" value="MGI"/>
</dbReference>
<dbReference type="GO" id="GO:1903135">
    <property type="term" value="F:cupric ion binding"/>
    <property type="evidence" value="ECO:0000315"/>
    <property type="project" value="CAFA"/>
</dbReference>
<dbReference type="GO" id="GO:1903136">
    <property type="term" value="F:cuprous ion binding"/>
    <property type="evidence" value="ECO:0007669"/>
    <property type="project" value="Ensembl"/>
</dbReference>
<dbReference type="GO" id="GO:0005539">
    <property type="term" value="F:glycosaminoglycan binding"/>
    <property type="evidence" value="ECO:0000314"/>
    <property type="project" value="ARUK-UCL"/>
</dbReference>
<dbReference type="GO" id="GO:0042802">
    <property type="term" value="F:identical protein binding"/>
    <property type="evidence" value="ECO:0000353"/>
    <property type="project" value="IntAct"/>
</dbReference>
<dbReference type="GO" id="GO:0005521">
    <property type="term" value="F:lamin binding"/>
    <property type="evidence" value="ECO:0007669"/>
    <property type="project" value="Ensembl"/>
</dbReference>
<dbReference type="GO" id="GO:0046872">
    <property type="term" value="F:metal ion binding"/>
    <property type="evidence" value="ECO:0000314"/>
    <property type="project" value="DisProt"/>
</dbReference>
<dbReference type="GO" id="GO:0008017">
    <property type="term" value="F:microtubule binding"/>
    <property type="evidence" value="ECO:0007669"/>
    <property type="project" value="Ensembl"/>
</dbReference>
<dbReference type="GO" id="GO:0060090">
    <property type="term" value="F:molecular adaptor activity"/>
    <property type="evidence" value="ECO:0000353"/>
    <property type="project" value="DisProt"/>
</dbReference>
<dbReference type="GO" id="GO:0140693">
    <property type="term" value="F:molecular condensate scaffold activity"/>
    <property type="evidence" value="ECO:0000314"/>
    <property type="project" value="DisProt"/>
</dbReference>
<dbReference type="GO" id="GO:0140677">
    <property type="term" value="F:molecular function activator activity"/>
    <property type="evidence" value="ECO:0000270"/>
    <property type="project" value="DisProt"/>
</dbReference>
<dbReference type="GO" id="GO:0002020">
    <property type="term" value="F:protease binding"/>
    <property type="evidence" value="ECO:0000353"/>
    <property type="project" value="ARUK-UCL"/>
</dbReference>
<dbReference type="GO" id="GO:0044877">
    <property type="term" value="F:protein-containing complex binding"/>
    <property type="evidence" value="ECO:0000353"/>
    <property type="project" value="ARUK-UCL"/>
</dbReference>
<dbReference type="GO" id="GO:0051087">
    <property type="term" value="F:protein-folding chaperone binding"/>
    <property type="evidence" value="ECO:0007669"/>
    <property type="project" value="Ensembl"/>
</dbReference>
<dbReference type="GO" id="GO:0038023">
    <property type="term" value="F:signaling receptor activity"/>
    <property type="evidence" value="ECO:0000315"/>
    <property type="project" value="ARUK-UCL"/>
</dbReference>
<dbReference type="GO" id="GO:0044325">
    <property type="term" value="F:transmembrane transporter binding"/>
    <property type="evidence" value="ECO:0007669"/>
    <property type="project" value="Ensembl"/>
</dbReference>
<dbReference type="GO" id="GO:0031802">
    <property type="term" value="F:type 5 metabotropic glutamate receptor binding"/>
    <property type="evidence" value="ECO:0000353"/>
    <property type="project" value="ARUK-UCL"/>
</dbReference>
<dbReference type="GO" id="GO:1904646">
    <property type="term" value="P:cellular response to amyloid-beta"/>
    <property type="evidence" value="ECO:0000316"/>
    <property type="project" value="ARUK-UCL"/>
</dbReference>
<dbReference type="GO" id="GO:0071280">
    <property type="term" value="P:cellular response to copper ion"/>
    <property type="evidence" value="ECO:0000266"/>
    <property type="project" value="MGI"/>
</dbReference>
<dbReference type="GO" id="GO:0071466">
    <property type="term" value="P:cellular response to xenobiotic stimulus"/>
    <property type="evidence" value="ECO:0000314"/>
    <property type="project" value="MGI"/>
</dbReference>
<dbReference type="GO" id="GO:0006878">
    <property type="term" value="P:intracellular copper ion homeostasis"/>
    <property type="evidence" value="ECO:0000304"/>
    <property type="project" value="MGI"/>
</dbReference>
<dbReference type="GO" id="GO:0035556">
    <property type="term" value="P:intracellular signal transduction"/>
    <property type="evidence" value="ECO:0000316"/>
    <property type="project" value="ARUK-UCL"/>
</dbReference>
<dbReference type="GO" id="GO:0007611">
    <property type="term" value="P:learning or memory"/>
    <property type="evidence" value="ECO:0000316"/>
    <property type="project" value="ARUK-UCL"/>
</dbReference>
<dbReference type="GO" id="GO:0046007">
    <property type="term" value="P:negative regulation of activated T cell proliferation"/>
    <property type="evidence" value="ECO:0000315"/>
    <property type="project" value="BHF-UCL"/>
</dbReference>
<dbReference type="GO" id="GO:1902992">
    <property type="term" value="P:negative regulation of amyloid precursor protein catabolic process"/>
    <property type="evidence" value="ECO:0000316"/>
    <property type="project" value="ARUK-UCL"/>
</dbReference>
<dbReference type="GO" id="GO:1902430">
    <property type="term" value="P:negative regulation of amyloid-beta formation"/>
    <property type="evidence" value="ECO:0000316"/>
    <property type="project" value="ARUK-UCL"/>
</dbReference>
<dbReference type="GO" id="GO:0043066">
    <property type="term" value="P:negative regulation of apoptotic process"/>
    <property type="evidence" value="ECO:0000316"/>
    <property type="project" value="MGI"/>
</dbReference>
<dbReference type="GO" id="GO:0070885">
    <property type="term" value="P:negative regulation of calcineurin-NFAT signaling cascade"/>
    <property type="evidence" value="ECO:0000315"/>
    <property type="project" value="BHF-UCL"/>
</dbReference>
<dbReference type="GO" id="GO:1902951">
    <property type="term" value="P:negative regulation of dendritic spine maintenance"/>
    <property type="evidence" value="ECO:0000316"/>
    <property type="project" value="ARUK-UCL"/>
</dbReference>
<dbReference type="GO" id="GO:0032700">
    <property type="term" value="P:negative regulation of interleukin-17 production"/>
    <property type="evidence" value="ECO:0000315"/>
    <property type="project" value="BHF-UCL"/>
</dbReference>
<dbReference type="GO" id="GO:0032703">
    <property type="term" value="P:negative regulation of interleukin-2 production"/>
    <property type="evidence" value="ECO:0000315"/>
    <property type="project" value="BHF-UCL"/>
</dbReference>
<dbReference type="GO" id="GO:1900272">
    <property type="term" value="P:negative regulation of long-term synaptic potentiation"/>
    <property type="evidence" value="ECO:0007669"/>
    <property type="project" value="Ensembl"/>
</dbReference>
<dbReference type="GO" id="GO:0050860">
    <property type="term" value="P:negative regulation of T cell receptor signaling pathway"/>
    <property type="evidence" value="ECO:0000315"/>
    <property type="project" value="BHF-UCL"/>
</dbReference>
<dbReference type="GO" id="GO:0000122">
    <property type="term" value="P:negative regulation of transcription by RNA polymerase II"/>
    <property type="evidence" value="ECO:0000315"/>
    <property type="project" value="BHF-UCL"/>
</dbReference>
<dbReference type="GO" id="GO:0032689">
    <property type="term" value="P:negative regulation of type II interferon production"/>
    <property type="evidence" value="ECO:0000315"/>
    <property type="project" value="BHF-UCL"/>
</dbReference>
<dbReference type="GO" id="GO:1990535">
    <property type="term" value="P:neuron projection maintenance"/>
    <property type="evidence" value="ECO:0000316"/>
    <property type="project" value="ARUK-UCL"/>
</dbReference>
<dbReference type="GO" id="GO:0006139">
    <property type="term" value="P:nucleobase-containing compound metabolic process"/>
    <property type="evidence" value="ECO:0000304"/>
    <property type="project" value="MGI"/>
</dbReference>
<dbReference type="GO" id="GO:0050850">
    <property type="term" value="P:positive regulation of calcium-mediated signaling"/>
    <property type="evidence" value="ECO:0000316"/>
    <property type="project" value="ARUK-UCL"/>
</dbReference>
<dbReference type="GO" id="GO:1900451">
    <property type="term" value="P:positive regulation of glutamate receptor signaling pathway"/>
    <property type="evidence" value="ECO:0007669"/>
    <property type="project" value="Ensembl"/>
</dbReference>
<dbReference type="GO" id="GO:0043525">
    <property type="term" value="P:positive regulation of neuron apoptotic process"/>
    <property type="evidence" value="ECO:0007669"/>
    <property type="project" value="Ensembl"/>
</dbReference>
<dbReference type="GO" id="GO:1903078">
    <property type="term" value="P:positive regulation of protein localization to plasma membrane"/>
    <property type="evidence" value="ECO:0000315"/>
    <property type="project" value="ARUK-UCL"/>
</dbReference>
<dbReference type="GO" id="GO:0090314">
    <property type="term" value="P:positive regulation of protein targeting to membrane"/>
    <property type="evidence" value="ECO:0000316"/>
    <property type="project" value="ARUK-UCL"/>
</dbReference>
<dbReference type="GO" id="GO:0031648">
    <property type="term" value="P:protein destabilization"/>
    <property type="evidence" value="ECO:0007669"/>
    <property type="project" value="Ensembl"/>
</dbReference>
<dbReference type="GO" id="GO:0051260">
    <property type="term" value="P:protein homooligomerization"/>
    <property type="evidence" value="ECO:0007669"/>
    <property type="project" value="InterPro"/>
</dbReference>
<dbReference type="GO" id="GO:1905664">
    <property type="term" value="P:regulation of calcium ion import across plasma membrane"/>
    <property type="evidence" value="ECO:0000316"/>
    <property type="project" value="ARUK-UCL"/>
</dbReference>
<dbReference type="GO" id="GO:1900449">
    <property type="term" value="P:regulation of glutamate receptor signaling pathway"/>
    <property type="evidence" value="ECO:0000316"/>
    <property type="project" value="ARUK-UCL"/>
</dbReference>
<dbReference type="GO" id="GO:1901379">
    <property type="term" value="P:regulation of potassium ion transmembrane transport"/>
    <property type="evidence" value="ECO:0000316"/>
    <property type="project" value="MGI"/>
</dbReference>
<dbReference type="GO" id="GO:0032880">
    <property type="term" value="P:regulation of protein localization"/>
    <property type="evidence" value="ECO:0000315"/>
    <property type="project" value="MGI"/>
</dbReference>
<dbReference type="GO" id="GO:1904645">
    <property type="term" value="P:response to amyloid-beta"/>
    <property type="evidence" value="ECO:0000316"/>
    <property type="project" value="ARUK-UCL"/>
</dbReference>
<dbReference type="GO" id="GO:0046686">
    <property type="term" value="P:response to cadmium ion"/>
    <property type="evidence" value="ECO:0007669"/>
    <property type="project" value="Ensembl"/>
</dbReference>
<dbReference type="GO" id="GO:0006979">
    <property type="term" value="P:response to oxidative stress"/>
    <property type="evidence" value="ECO:0000314"/>
    <property type="project" value="MGI"/>
</dbReference>
<dbReference type="DisProt" id="DP00265"/>
<dbReference type="FunFam" id="1.10.790.10:FF:000001">
    <property type="entry name" value="Major prion protein"/>
    <property type="match status" value="1"/>
</dbReference>
<dbReference type="Gene3D" id="1.10.790.10">
    <property type="entry name" value="Prion/Doppel protein, beta-ribbon domain"/>
    <property type="match status" value="1"/>
</dbReference>
<dbReference type="InterPro" id="IPR000817">
    <property type="entry name" value="Prion"/>
</dbReference>
<dbReference type="InterPro" id="IPR036924">
    <property type="entry name" value="Prion/Doppel_b-ribbon_dom_sf"/>
</dbReference>
<dbReference type="InterPro" id="IPR022416">
    <property type="entry name" value="Prion/Doppel_prot_b-ribbon_dom"/>
</dbReference>
<dbReference type="InterPro" id="IPR020949">
    <property type="entry name" value="Prion_copper_b_octapeptide"/>
</dbReference>
<dbReference type="InterPro" id="IPR025860">
    <property type="entry name" value="Prion_N"/>
</dbReference>
<dbReference type="PANTHER" id="PTHR15506">
    <property type="entry name" value="DOPPEL PRION"/>
    <property type="match status" value="1"/>
</dbReference>
<dbReference type="PANTHER" id="PTHR15506:SF2">
    <property type="entry name" value="MAJOR PRION PROTEIN"/>
    <property type="match status" value="1"/>
</dbReference>
<dbReference type="Pfam" id="PF00377">
    <property type="entry name" value="Prion"/>
    <property type="match status" value="1"/>
</dbReference>
<dbReference type="Pfam" id="PF11587">
    <property type="entry name" value="Prion_bPrPp"/>
    <property type="match status" value="1"/>
</dbReference>
<dbReference type="Pfam" id="PF03991">
    <property type="entry name" value="Prion_octapep"/>
    <property type="match status" value="1"/>
</dbReference>
<dbReference type="PRINTS" id="PR00341">
    <property type="entry name" value="PRION"/>
</dbReference>
<dbReference type="SMART" id="SM00157">
    <property type="entry name" value="PRP"/>
    <property type="match status" value="1"/>
</dbReference>
<dbReference type="SUPFAM" id="SSF54098">
    <property type="entry name" value="Prion-like"/>
    <property type="match status" value="1"/>
</dbReference>
<dbReference type="PROSITE" id="PS00291">
    <property type="entry name" value="PRION_1"/>
    <property type="match status" value="1"/>
</dbReference>
<dbReference type="PROSITE" id="PS00706">
    <property type="entry name" value="PRION_2"/>
    <property type="match status" value="1"/>
</dbReference>
<accession>P04925</accession>
<name>PRIO_MOUSE</name>
<gene>
    <name type="primary">Prnp</name>
    <name type="synonym">Prn-p</name>
    <name type="synonym">Prp</name>
</gene>
<feature type="signal peptide" evidence="17">
    <location>
        <begin position="1"/>
        <end position="22"/>
    </location>
</feature>
<feature type="chain" id="PRO_0000025697" description="Major prion protein">
    <location>
        <begin position="23"/>
        <end position="230"/>
    </location>
</feature>
<feature type="propeptide" id="PRO_0000025698" description="Removed in mature form" evidence="2">
    <location>
        <begin position="231"/>
        <end position="254"/>
    </location>
</feature>
<feature type="repeat" description="1">
    <location>
        <begin position="51"/>
        <end position="58"/>
    </location>
</feature>
<feature type="repeat" description="2">
    <location>
        <begin position="59"/>
        <end position="66"/>
    </location>
</feature>
<feature type="repeat" description="3">
    <location>
        <begin position="67"/>
        <end position="74"/>
    </location>
</feature>
<feature type="repeat" description="4">
    <location>
        <begin position="75"/>
        <end position="82"/>
    </location>
</feature>
<feature type="repeat" description="5">
    <location>
        <begin position="83"/>
        <end position="90"/>
    </location>
</feature>
<feature type="region of interest" description="Interaction with GRB2, ERI3 and SYN1" evidence="5">
    <location>
        <begin position="23"/>
        <end position="231"/>
    </location>
</feature>
<feature type="region of interest" description="Interaction with ADGRG6" evidence="16">
    <location>
        <begin position="23"/>
        <end position="38"/>
    </location>
</feature>
<feature type="region of interest" description="Disordered" evidence="3">
    <location>
        <begin position="25"/>
        <end position="104"/>
    </location>
</feature>
<feature type="region of interest" description="5 X 8 AA tandem repeats of P-H-G-G-G-W-G-Q">
    <location>
        <begin position="51"/>
        <end position="90"/>
    </location>
</feature>
<feature type="compositionally biased region" description="Gly residues" evidence="3">
    <location>
        <begin position="54"/>
        <end position="94"/>
    </location>
</feature>
<feature type="binding site" evidence="1">
    <location>
        <position position="60"/>
    </location>
    <ligand>
        <name>Cu(2+)</name>
        <dbReference type="ChEBI" id="CHEBI:29036"/>
        <label>1</label>
    </ligand>
</feature>
<feature type="binding site" evidence="1">
    <location>
        <position position="61"/>
    </location>
    <ligand>
        <name>Cu(2+)</name>
        <dbReference type="ChEBI" id="CHEBI:29036"/>
        <label>1</label>
    </ligand>
</feature>
<feature type="binding site" evidence="1">
    <location>
        <position position="62"/>
    </location>
    <ligand>
        <name>Cu(2+)</name>
        <dbReference type="ChEBI" id="CHEBI:29036"/>
        <label>1</label>
    </ligand>
</feature>
<feature type="binding site" evidence="1">
    <location>
        <position position="68"/>
    </location>
    <ligand>
        <name>Cu(2+)</name>
        <dbReference type="ChEBI" id="CHEBI:29036"/>
        <label>2</label>
    </ligand>
</feature>
<feature type="binding site" evidence="1">
    <location>
        <position position="69"/>
    </location>
    <ligand>
        <name>Cu(2+)</name>
        <dbReference type="ChEBI" id="CHEBI:29036"/>
        <label>2</label>
    </ligand>
</feature>
<feature type="binding site" evidence="1">
    <location>
        <position position="70"/>
    </location>
    <ligand>
        <name>Cu(2+)</name>
        <dbReference type="ChEBI" id="CHEBI:29036"/>
        <label>2</label>
    </ligand>
</feature>
<feature type="binding site" evidence="1">
    <location>
        <position position="76"/>
    </location>
    <ligand>
        <name>Cu(2+)</name>
        <dbReference type="ChEBI" id="CHEBI:29036"/>
        <label>3</label>
    </ligand>
</feature>
<feature type="binding site" evidence="1">
    <location>
        <position position="77"/>
    </location>
    <ligand>
        <name>Cu(2+)</name>
        <dbReference type="ChEBI" id="CHEBI:29036"/>
        <label>3</label>
    </ligand>
</feature>
<feature type="binding site" evidence="1">
    <location>
        <position position="78"/>
    </location>
    <ligand>
        <name>Cu(2+)</name>
        <dbReference type="ChEBI" id="CHEBI:29036"/>
        <label>3</label>
    </ligand>
</feature>
<feature type="binding site" evidence="1">
    <location>
        <position position="84"/>
    </location>
    <ligand>
        <name>Cu(2+)</name>
        <dbReference type="ChEBI" id="CHEBI:29036"/>
        <label>4</label>
    </ligand>
</feature>
<feature type="binding site" evidence="1">
    <location>
        <position position="85"/>
    </location>
    <ligand>
        <name>Cu(2+)</name>
        <dbReference type="ChEBI" id="CHEBI:29036"/>
        <label>4</label>
    </ligand>
</feature>
<feature type="binding site" evidence="1">
    <location>
        <position position="86"/>
    </location>
    <ligand>
        <name>Cu(2+)</name>
        <dbReference type="ChEBI" id="CHEBI:29036"/>
        <label>4</label>
    </ligand>
</feature>
<feature type="modified residue" description="Hydroxyproline" evidence="4">
    <location>
        <position position="44"/>
    </location>
</feature>
<feature type="lipid moiety-binding region" description="GPI-anchor amidated serine" evidence="2">
    <location>
        <position position="230"/>
    </location>
</feature>
<feature type="glycosylation site" description="N-linked (GlcNAc...) asparagine" evidence="21">
    <location>
        <position position="180"/>
    </location>
</feature>
<feature type="glycosylation site" description="N-linked (GlcNAc...) asparagine" evidence="13">
    <location>
        <position position="196"/>
    </location>
</feature>
<feature type="disulfide bond">
    <location>
        <begin position="178"/>
        <end position="213"/>
    </location>
</feature>
<feature type="sequence variant" description="Linked to long incubation time.">
    <original>L</original>
    <variation>F</variation>
    <location>
        <position position="108"/>
    </location>
</feature>
<feature type="sequence variant" description="Linked to long incubation time; requires 2 nucleotide substitutions.">
    <original>T</original>
    <variation>V</variation>
    <location>
        <position position="189"/>
    </location>
</feature>
<feature type="mutagenesis site" description="No effect on interaction with GRB2." evidence="5">
    <original>P</original>
    <variation>L</variation>
    <location>
        <position position="101"/>
    </location>
</feature>
<feature type="mutagenesis site" description="No effect on interaction with GRB2." evidence="5">
    <original>P</original>
    <variation>L</variation>
    <location>
        <position position="104"/>
    </location>
</feature>
<feature type="sequence conflict" description="In Ref. 2; AAA39996 and 6; AAA39999." evidence="21" ref="2 6">
    <original>M</original>
    <variation>V</variation>
    <location>
        <position position="133"/>
    </location>
</feature>
<feature type="strand" evidence="26">
    <location>
        <begin position="95"/>
        <end position="99"/>
    </location>
</feature>
<feature type="strand" evidence="26">
    <location>
        <begin position="106"/>
        <end position="112"/>
    </location>
</feature>
<feature type="strand" evidence="26">
    <location>
        <begin position="114"/>
        <end position="116"/>
    </location>
</feature>
<feature type="strand" evidence="24">
    <location>
        <begin position="119"/>
        <end position="121"/>
    </location>
</feature>
<feature type="strand" evidence="24">
    <location>
        <begin position="124"/>
        <end position="128"/>
    </location>
</feature>
<feature type="strand" evidence="26">
    <location>
        <begin position="132"/>
        <end position="134"/>
    </location>
</feature>
<feature type="strand" evidence="25">
    <location>
        <begin position="137"/>
        <end position="139"/>
    </location>
</feature>
<feature type="helix" evidence="24">
    <location>
        <begin position="143"/>
        <end position="152"/>
    </location>
</feature>
<feature type="helix" evidence="24">
    <location>
        <begin position="153"/>
        <end position="155"/>
    </location>
</feature>
<feature type="strand" evidence="26">
    <location>
        <begin position="158"/>
        <end position="162"/>
    </location>
</feature>
<feature type="helix" evidence="24">
    <location>
        <begin position="165"/>
        <end position="167"/>
    </location>
</feature>
<feature type="strand" evidence="24">
    <location>
        <begin position="168"/>
        <end position="170"/>
    </location>
</feature>
<feature type="helix" evidence="24">
    <location>
        <begin position="171"/>
        <end position="188"/>
    </location>
</feature>
<feature type="turn" evidence="23">
    <location>
        <begin position="192"/>
        <end position="194"/>
    </location>
</feature>
<feature type="helix" evidence="24">
    <location>
        <begin position="199"/>
        <end position="225"/>
    </location>
</feature>
<feature type="helix" evidence="22">
    <location>
        <begin position="226"/>
        <end position="228"/>
    </location>
</feature>
<reference key="1">
    <citation type="journal article" date="1987" name="Cell">
        <title>Distinct prion proteins in short and long scrapie incubation period mice.</title>
        <authorList>
            <person name="Westaway D."/>
            <person name="Goodman P.A."/>
            <person name="Mirenda C.A."/>
            <person name="McKinley M.P."/>
            <person name="Carlson G.A."/>
            <person name="Prusiner S.B."/>
        </authorList>
    </citation>
    <scope>NUCLEOTIDE SEQUENCE [GENOMIC DNA]</scope>
    <scope>VARIANTS PHE-108 AND VAL-189</scope>
    <source>
        <strain>I/LnJ</strain>
        <strain>NZW/LacJ</strain>
    </source>
</reference>
<reference key="2">
    <citation type="journal article" date="1986" name="Proc. Natl. Acad. Sci. U.S.A.">
        <title>Molecular cloning and complete sequence of prion protein cDNA from mouse brain infected with the scrapie agent.</title>
        <authorList>
            <person name="Locht C."/>
            <person name="Chesebro B."/>
            <person name="Race R."/>
            <person name="Keith J.M."/>
        </authorList>
    </citation>
    <scope>NUCLEOTIDE SEQUENCE [MRNA]</scope>
</reference>
<reference key="3">
    <citation type="journal article" date="1998" name="Genome Res.">
        <title>Complete genomic sequence and analysis of the prion protein gene region from three mammalian species.</title>
        <authorList>
            <person name="Lee I.Y."/>
            <person name="Westaway D."/>
            <person name="Smit A.F.A."/>
            <person name="Wang K."/>
            <person name="Seto J."/>
            <person name="Chen L."/>
            <person name="Acharya C."/>
            <person name="Ankener M."/>
            <person name="Baskin D."/>
            <person name="Cooper C."/>
            <person name="Yao H."/>
            <person name="Prusiner S.B."/>
            <person name="Hood L.E."/>
        </authorList>
    </citation>
    <scope>NUCLEOTIDE SEQUENCE [GENOMIC DNA]</scope>
    <source>
        <strain>NZW/LacJ</strain>
        <tissue>Brain</tissue>
    </source>
</reference>
<reference key="4">
    <citation type="journal article" date="2004" name="Genome Res.">
        <title>The status, quality, and expansion of the NIH full-length cDNA project: the Mammalian Gene Collection (MGC).</title>
        <authorList>
            <consortium name="The MGC Project Team"/>
        </authorList>
    </citation>
    <scope>NUCLEOTIDE SEQUENCE [LARGE SCALE MRNA]</scope>
</reference>
<reference key="5">
    <citation type="journal article" date="1988" name="Eur. J. Biochem.">
        <title>Molecular pathology of scrapie-associated fibril protein (PrP) in mouse brain affected by the ME7 strain of scrapie.</title>
        <authorList>
            <person name="Hope J."/>
            <person name="Multhaup G."/>
            <person name="Reekie L.J.D."/>
            <person name="Kimberlin R.H."/>
            <person name="Beyreuther K."/>
        </authorList>
    </citation>
    <scope>PROTEIN SEQUENCE OF N-TERMINUS</scope>
</reference>
<reference key="6">
    <citation type="journal article" date="1985" name="Nature">
        <title>Identification of scrapie prion protein-specific mRNA in scrapie-infected and uninfected brain.</title>
        <authorList>
            <person name="Chesebro B."/>
            <person name="Race R."/>
            <person name="Wehrly K."/>
            <person name="Nishio J."/>
            <person name="Bloom M."/>
            <person name="Lechner D."/>
            <person name="Bergstrom S."/>
            <person name="Robbins K."/>
            <person name="Mayer L."/>
            <person name="Keith J.M."/>
            <person name="Garon C."/>
            <person name="Haase A."/>
        </authorList>
    </citation>
    <scope>NUCLEOTIDE SEQUENCE [MRNA] OF 87-164</scope>
</reference>
<reference key="7">
    <citation type="journal article" date="1994" name="Nature">
        <title>Prion protein is necessary for normal synaptic function.</title>
        <authorList>
            <person name="Collinge J."/>
            <person name="Whittington M.A."/>
            <person name="Sidle K.C."/>
            <person name="Smith C.J."/>
            <person name="Palmer M.S."/>
            <person name="Clarke A.R."/>
            <person name="Jefferys J.G."/>
        </authorList>
    </citation>
    <scope>DISRUPTION PHENOTYPE</scope>
</reference>
<reference key="8">
    <citation type="journal article" date="1996" name="Proc. Natl. Acad. Sci. U.S.A.">
        <title>Mice deficient for prion protein exhibit normal neuronal excitability and synaptic transmission in the hippocampus.</title>
        <authorList>
            <person name="Lledo P.M."/>
            <person name="Tremblay P."/>
            <person name="DeArmond S.J."/>
            <person name="Prusiner S.B."/>
            <person name="Nicoll R.A."/>
        </authorList>
    </citation>
    <scope>DISRUPTION PHENOTYPE</scope>
</reference>
<reference key="9">
    <citation type="journal article" date="1998" name="J. Biol. Chem.">
        <title>Copper stimulates endocytosis of the prion protein.</title>
        <authorList>
            <person name="Pauly P.C."/>
            <person name="Harris D.A."/>
        </authorList>
    </citation>
    <scope>SUBCELLULAR LOCATION</scope>
</reference>
<reference key="10">
    <citation type="journal article" date="2000" name="EMBO J.">
        <title>Post-translational hydroxylation at the N-terminus of the prion protein reveals presence of PPII structure in vivo.</title>
        <authorList>
            <person name="Gill A.C."/>
            <person name="Ritchie M.A."/>
            <person name="Hunt L.G."/>
            <person name="Steane S.E."/>
            <person name="Davies K.G."/>
            <person name="Bocking S.P."/>
            <person name="Rhie A.G.O."/>
            <person name="Bennett A.D."/>
            <person name="Hope J."/>
        </authorList>
    </citation>
    <scope>HYDROXYLATION AT PRO-44</scope>
</reference>
<reference key="11">
    <citation type="journal article" date="2001" name="J. Biol. Chem.">
        <title>PrPC directly interacts with proteins involved in signaling pathways.</title>
        <authorList>
            <person name="Spielhaupter C."/>
            <person name="Schaetzl H.M."/>
        </authorList>
    </citation>
    <scope>SUBCELLULAR LOCATION</scope>
    <scope>INTERACTION WITH GRB2; ERI3 AND SYN1</scope>
    <scope>MUTAGENESIS OF PRO-101 AND PRO-104</scope>
</reference>
<reference key="12">
    <citation type="journal article" date="2002" name="J. Biol. Chem.">
        <title>Cellular phenotyping of secretory and nuclear prion proteins associated with inherited prion diseases.</title>
        <authorList>
            <person name="Lorenz H."/>
            <person name="Windl O."/>
            <person name="Kretzschmar H.A."/>
        </authorList>
    </citation>
    <scope>SUBCELLULAR LOCATION</scope>
</reference>
<reference key="13">
    <citation type="journal article" date="2003" name="J. Biol. Chem.">
        <title>Prion, amyloid beta-derived Cu(II) ions, or free Zn(II) ions support S-nitroso-dependent autocleavage of glypican-1 heparan sulfate.</title>
        <authorList>
            <person name="Mani K."/>
            <person name="Cheng F."/>
            <person name="Havsmark B."/>
            <person name="Jonsson M."/>
            <person name="Belting M."/>
            <person name="Fransson L.A."/>
        </authorList>
    </citation>
    <scope>COPPER BINDING</scope>
    <scope>SUBCELLULAR LOCATION</scope>
    <scope>FUNCTION</scope>
</reference>
<reference key="14">
    <citation type="journal article" date="2004" name="Am. J. Pathol.">
        <title>Male infertility and DNA damage in Doppel knockout and prion protein/Doppel double-knockout mice.</title>
        <authorList>
            <person name="Paisley D."/>
            <person name="Banks S."/>
            <person name="Selfridge J."/>
            <person name="McLennan N.F."/>
            <person name="Ritchie A.M."/>
            <person name="McEwan C."/>
            <person name="Irvine D.S."/>
            <person name="Saunders P.T."/>
            <person name="Manson J.C."/>
            <person name="Melton D.W."/>
        </authorList>
    </citation>
    <scope>DISRUPTION PHENOTYPE</scope>
</reference>
<reference key="15">
    <citation type="journal article" date="2004" name="Proc. Natl. Acad. Sci. U.S.A.">
        <title>Disruption of Doppel prevents neurodegeneration in mice with extensive Prnp deletions.</title>
        <authorList>
            <person name="Genoud N."/>
            <person name="Behrens A."/>
            <person name="Miele G."/>
            <person name="Robay D."/>
            <person name="Heppner F.L."/>
            <person name="Freigang S."/>
            <person name="Aguzzi A."/>
        </authorList>
    </citation>
    <scope>DISRUPTION PHENOTYPE</scope>
</reference>
<reference key="16">
    <citation type="journal article" date="2006" name="J. Neurochem.">
        <title>Copper-dependent co-internalization of the prion protein and glypican-1.</title>
        <authorList>
            <person name="Cheng F."/>
            <person name="Lindqvist J."/>
            <person name="Haigh C.L."/>
            <person name="Brown D.R."/>
            <person name="Mani K."/>
        </authorList>
    </citation>
    <scope>SUBCELLULAR LOCATION</scope>
    <scope>COPPER-BINDING</scope>
</reference>
<reference key="17">
    <citation type="journal article" date="2006" name="Proc. Natl. Acad. Sci. U.S.A.">
        <title>Prion protein (PrPc) positively regulates neural precursor proliferation during developmental and adult mammalian neurogenesis.</title>
        <authorList>
            <person name="Steele A.D."/>
            <person name="Emsley J.G."/>
            <person name="Ozdinler P.H."/>
            <person name="Lindquist S."/>
            <person name="Macklis J.D."/>
        </authorList>
    </citation>
    <scope>DISRUPTION PHENOTYPE</scope>
    <scope>GLYCOSYLATION</scope>
    <scope>FUNCTION</scope>
    <scope>TISSUE SPECIFICITY</scope>
</reference>
<reference key="18">
    <citation type="journal article" date="2009" name="Cell">
        <title>Functional depletion of mahogunin by cytosolically exposed prion protein contributes to neurodegeneration.</title>
        <authorList>
            <person name="Chakrabarti O."/>
            <person name="Hegde R.S."/>
        </authorList>
    </citation>
    <scope>INTERACTION WITH MGRN1</scope>
</reference>
<reference key="19">
    <citation type="journal article" date="2009" name="Nat. Biotechnol.">
        <title>Mass-spectrometric identification and relative quantification of N-linked cell surface glycoproteins.</title>
        <authorList>
            <person name="Wollscheid B."/>
            <person name="Bausch-Fluck D."/>
            <person name="Henderson C."/>
            <person name="O'Brien R."/>
            <person name="Bibel M."/>
            <person name="Schiess R."/>
            <person name="Aebersold R."/>
            <person name="Watts J.D."/>
        </authorList>
    </citation>
    <scope>GLYCOSYLATION [LARGE SCALE ANALYSIS] AT ASN-196</scope>
</reference>
<reference key="20">
    <citation type="journal article" date="2009" name="Nature">
        <title>Cellular prion protein mediates impairment of synaptic plasticity by amyloid-beta oligomers.</title>
        <authorList>
            <person name="Lauren J."/>
            <person name="Gimbel D.A."/>
            <person name="Nygaard H.B."/>
            <person name="Gilbert J.W."/>
            <person name="Strittmatter S.M."/>
        </authorList>
    </citation>
    <scope>DISRUPTION PHENOTYPE</scope>
    <scope>INTERACTION WITH APP</scope>
    <scope>FUNCTION</scope>
</reference>
<reference key="21">
    <citation type="journal article" date="2009" name="PLoS ONE">
        <title>Prion protein (PrP) knock-out mice show altered iron metabolism: a functional role for PrP in iron uptake and transport.</title>
        <authorList>
            <person name="Singh A."/>
            <person name="Kong Q."/>
            <person name="Luo X."/>
            <person name="Petersen R.B."/>
            <person name="Meyerson H."/>
            <person name="Singh N."/>
        </authorList>
    </citation>
    <scope>DISRUPTION PHENOTYPE</scope>
    <scope>FUNCTION</scope>
    <scope>GLYCOSYLATION</scope>
    <scope>TISSUE SPECIFICITY</scope>
</reference>
<reference key="22">
    <citation type="journal article" date="2009" name="PLoS Pathog.">
        <title>Early onset prion disease from octarepeat expansion correlates with copper or zinc binding properties.</title>
        <authorList>
            <person name="Stevens D.J."/>
            <person name="Walter E.D."/>
            <person name="Rodriguez A."/>
            <person name="Draper D."/>
            <person name="Davies P."/>
            <person name="Brown D.R."/>
            <person name="Millhauser G.L."/>
        </authorList>
    </citation>
    <scope>COPPER-BINDING</scope>
</reference>
<reference key="23">
    <citation type="journal article" date="2010" name="Cell">
        <title>A tissue-specific atlas of mouse protein phosphorylation and expression.</title>
        <authorList>
            <person name="Huttlin E.L."/>
            <person name="Jedrychowski M.P."/>
            <person name="Elias J.E."/>
            <person name="Goswami T."/>
            <person name="Rad R."/>
            <person name="Beausoleil S.A."/>
            <person name="Villen J."/>
            <person name="Haas W."/>
            <person name="Sowa M.E."/>
            <person name="Gygi S.P."/>
        </authorList>
    </citation>
    <scope>IDENTIFICATION BY MASS SPECTROMETRY [LARGE SCALE ANALYSIS]</scope>
    <source>
        <tissue>Brain</tissue>
        <tissue>Heart</tissue>
    </source>
</reference>
<reference key="24">
    <citation type="journal article" date="2010" name="Nat. Neurosci.">
        <title>Axonal prion protein is required for peripheral myelin maintenance.</title>
        <authorList>
            <person name="Bremer J."/>
            <person name="Baumann F."/>
            <person name="Tiberi C."/>
            <person name="Wessig C."/>
            <person name="Fischer H."/>
            <person name="Schwarz P."/>
            <person name="Steele A.D."/>
            <person name="Toyka K.V."/>
            <person name="Nave K.A."/>
            <person name="Weis J."/>
            <person name="Aguzzi A."/>
        </authorList>
    </citation>
    <scope>DISRUPTION PHENOTYPE</scope>
</reference>
<reference key="25">
    <citation type="journal article" date="1996" name="Nature">
        <title>NMR structure of the mouse prion protein domain PrP(121-321).</title>
        <authorList>
            <person name="Riek R."/>
            <person name="Hornemann S."/>
            <person name="Wider G."/>
            <person name="Bileter M."/>
            <person name="Glockshuber R."/>
            <person name="Wuethrich K."/>
        </authorList>
    </citation>
    <scope>STRUCTURE BY NMR OF 120-230</scope>
</reference>
<reference key="26">
    <citation type="journal article" date="1997" name="FEBS Lett.">
        <title>NMR characterization of the full-length recombinant murine prion protein, mPrP(23-231).</title>
        <authorList>
            <person name="Riek R."/>
            <person name="Hornemann S."/>
            <person name="Wider G."/>
            <person name="Glockshuber R."/>
            <person name="Wuethrich K."/>
        </authorList>
    </citation>
    <scope>STRUCTURE BY NMR OF 23-231</scope>
</reference>
<reference key="27">
    <citation type="journal article" date="2016" name="Nature">
        <title>The prion protein is an agonistic ligand of the G protein-coupled receptor Adgrg6.</title>
        <authorList>
            <person name="Kueffer A."/>
            <person name="Lakkaraju A.K."/>
            <person name="Mogha A."/>
            <person name="Petersen S.C."/>
            <person name="Airich K."/>
            <person name="Doucerain C."/>
            <person name="Marpakwar R."/>
            <person name="Bakirci P."/>
            <person name="Senatore A."/>
            <person name="Monnard A."/>
            <person name="Schiavi C."/>
            <person name="Nuvolone M."/>
            <person name="Grosshans B."/>
            <person name="Hornemann S."/>
            <person name="Bassilana F."/>
            <person name="Monk K.R."/>
            <person name="Aguzzi A."/>
        </authorList>
    </citation>
    <scope>INTERACTION WITH ADGRG6</scope>
    <scope>FUNCTION</scope>
</reference>
<proteinExistence type="evidence at protein level"/>
<organism>
    <name type="scientific">Mus musculus</name>
    <name type="common">Mouse</name>
    <dbReference type="NCBI Taxonomy" id="10090"/>
    <lineage>
        <taxon>Eukaryota</taxon>
        <taxon>Metazoa</taxon>
        <taxon>Chordata</taxon>
        <taxon>Craniata</taxon>
        <taxon>Vertebrata</taxon>
        <taxon>Euteleostomi</taxon>
        <taxon>Mammalia</taxon>
        <taxon>Eutheria</taxon>
        <taxon>Euarchontoglires</taxon>
        <taxon>Glires</taxon>
        <taxon>Rodentia</taxon>
        <taxon>Myomorpha</taxon>
        <taxon>Muroidea</taxon>
        <taxon>Muridae</taxon>
        <taxon>Murinae</taxon>
        <taxon>Mus</taxon>
        <taxon>Mus</taxon>
    </lineage>
</organism>
<protein>
    <recommendedName>
        <fullName>Major prion protein</fullName>
        <shortName>PrP</shortName>
    </recommendedName>
    <alternativeName>
        <fullName>PrP27-30</fullName>
    </alternativeName>
    <alternativeName>
        <fullName>PrP33-35C</fullName>
    </alternativeName>
    <cdAntigenName>CD230</cdAntigenName>
</protein>
<evidence type="ECO:0000250" key="1">
    <source>
        <dbReference type="UniProtKB" id="P04156"/>
    </source>
</evidence>
<evidence type="ECO:0000250" key="2">
    <source>
        <dbReference type="UniProtKB" id="P04273"/>
    </source>
</evidence>
<evidence type="ECO:0000256" key="3">
    <source>
        <dbReference type="SAM" id="MobiDB-lite"/>
    </source>
</evidence>
<evidence type="ECO:0000269" key="4">
    <source>
    </source>
</evidence>
<evidence type="ECO:0000269" key="5">
    <source>
    </source>
</evidence>
<evidence type="ECO:0000269" key="6">
    <source>
    </source>
</evidence>
<evidence type="ECO:0000269" key="7">
    <source>
    </source>
</evidence>
<evidence type="ECO:0000269" key="8">
    <source>
    </source>
</evidence>
<evidence type="ECO:0000269" key="9">
    <source>
    </source>
</evidence>
<evidence type="ECO:0000269" key="10">
    <source>
    </source>
</evidence>
<evidence type="ECO:0000269" key="11">
    <source>
    </source>
</evidence>
<evidence type="ECO:0000269" key="12">
    <source>
    </source>
</evidence>
<evidence type="ECO:0000269" key="13">
    <source>
    </source>
</evidence>
<evidence type="ECO:0000269" key="14">
    <source>
    </source>
</evidence>
<evidence type="ECO:0000269" key="15">
    <source>
    </source>
</evidence>
<evidence type="ECO:0000269" key="16">
    <source>
    </source>
</evidence>
<evidence type="ECO:0000269" key="17">
    <source>
    </source>
</evidence>
<evidence type="ECO:0000269" key="18">
    <source>
    </source>
</evidence>
<evidence type="ECO:0000269" key="19">
    <source>
    </source>
</evidence>
<evidence type="ECO:0000269" key="20">
    <source>
    </source>
</evidence>
<evidence type="ECO:0000305" key="21"/>
<evidence type="ECO:0007829" key="22">
    <source>
        <dbReference type="PDB" id="2KU5"/>
    </source>
</evidence>
<evidence type="ECO:0007829" key="23">
    <source>
        <dbReference type="PDB" id="6AQ7"/>
    </source>
</evidence>
<evidence type="ECO:0007829" key="24">
    <source>
        <dbReference type="PDB" id="6HER"/>
    </source>
</evidence>
<evidence type="ECO:0007829" key="25">
    <source>
        <dbReference type="PDB" id="7QIG"/>
    </source>
</evidence>
<evidence type="ECO:0007829" key="26">
    <source>
        <dbReference type="PDB" id="8A00"/>
    </source>
</evidence>
<sequence length="254" mass="27977">MANLGYWLLALFVTMWTDVGLCKKRPKPGGWNTGGSRYPGQGSPGGNRYPPQGGTWGQPHGGGWGQPHGGSWGQPHGGSWGQPHGGGWGQGGGTHNQWNKPSKPKTNLKHVAGAAAAGAVVGGLGGYMLGSAMSRPMIHFGNDWEDRYYRENMYRYPNQVYYRPVDQYSNQNNFVHDCVNITIKQHTVTTTTKGENFTETDVKMMERVVEQMCVTQYQKESQAYYDGRRSSSTVLFSSPPVILLISFLIFLIVG</sequence>